<evidence type="ECO:0000255" key="1">
    <source>
        <dbReference type="HAMAP-Rule" id="MF_01702"/>
    </source>
</evidence>
<reference key="1">
    <citation type="journal article" date="2002" name="Nature">
        <title>Complete genome sequence of the model actinomycete Streptomyces coelicolor A3(2).</title>
        <authorList>
            <person name="Bentley S.D."/>
            <person name="Chater K.F."/>
            <person name="Cerdeno-Tarraga A.-M."/>
            <person name="Challis G.L."/>
            <person name="Thomson N.R."/>
            <person name="James K.D."/>
            <person name="Harris D.E."/>
            <person name="Quail M.A."/>
            <person name="Kieser H."/>
            <person name="Harper D."/>
            <person name="Bateman A."/>
            <person name="Brown S."/>
            <person name="Chandra G."/>
            <person name="Chen C.W."/>
            <person name="Collins M."/>
            <person name="Cronin A."/>
            <person name="Fraser A."/>
            <person name="Goble A."/>
            <person name="Hidalgo J."/>
            <person name="Hornsby T."/>
            <person name="Howarth S."/>
            <person name="Huang C.-H."/>
            <person name="Kieser T."/>
            <person name="Larke L."/>
            <person name="Murphy L.D."/>
            <person name="Oliver K."/>
            <person name="O'Neil S."/>
            <person name="Rabbinowitsch E."/>
            <person name="Rajandream M.A."/>
            <person name="Rutherford K.M."/>
            <person name="Rutter S."/>
            <person name="Seeger K."/>
            <person name="Saunders D."/>
            <person name="Sharp S."/>
            <person name="Squares R."/>
            <person name="Squares S."/>
            <person name="Taylor K."/>
            <person name="Warren T."/>
            <person name="Wietzorrek A."/>
            <person name="Woodward J.R."/>
            <person name="Barrell B.G."/>
            <person name="Parkhill J."/>
            <person name="Hopwood D.A."/>
        </authorList>
    </citation>
    <scope>NUCLEOTIDE SEQUENCE [LARGE SCALE GENOMIC DNA]</scope>
    <source>
        <strain>ATCC BAA-471 / A3(2) / M145</strain>
    </source>
</reference>
<gene>
    <name evidence="1" type="primary">pstB</name>
    <name type="ordered locus">SCO4139</name>
    <name type="ORF">SCD84.06c</name>
</gene>
<sequence>MAKRIDVSGLNAYYGSFLAIEDISMTVEPRSVTAFIGPSGCGKSTFLRTLNRMHEVTPGGRVDGKVMLDDENLYGAGIDPVAVRREVGMVFQRPNPFPTMSVYDNVAAGLRLNGKYKKSQLDDVVEKSLRGANLWNEVKDRLNKPGSGLSGGQQQRLCIARAIAVEPNVLLMDEPCSALDPISTLAIEDLIGELKERFTIVIVTHNMQQAARVSDRTAFFNLAAVGQPGKLIEIDETERIFSNPSVQATEDYISGRFG</sequence>
<keyword id="KW-0067">ATP-binding</keyword>
<keyword id="KW-1003">Cell membrane</keyword>
<keyword id="KW-0472">Membrane</keyword>
<keyword id="KW-0547">Nucleotide-binding</keyword>
<keyword id="KW-0592">Phosphate transport</keyword>
<keyword id="KW-1185">Reference proteome</keyword>
<keyword id="KW-1278">Translocase</keyword>
<keyword id="KW-0813">Transport</keyword>
<comment type="function">
    <text evidence="1">Part of the ABC transporter complex PstSACB involved in phosphate import. Responsible for energy coupling to the transport system.</text>
</comment>
<comment type="catalytic activity">
    <reaction evidence="1">
        <text>phosphate(out) + ATP + H2O = ADP + 2 phosphate(in) + H(+)</text>
        <dbReference type="Rhea" id="RHEA:24440"/>
        <dbReference type="ChEBI" id="CHEBI:15377"/>
        <dbReference type="ChEBI" id="CHEBI:15378"/>
        <dbReference type="ChEBI" id="CHEBI:30616"/>
        <dbReference type="ChEBI" id="CHEBI:43474"/>
        <dbReference type="ChEBI" id="CHEBI:456216"/>
        <dbReference type="EC" id="7.3.2.1"/>
    </reaction>
</comment>
<comment type="subunit">
    <text evidence="1">The complex is composed of two ATP-binding proteins (PstB), two transmembrane proteins (PstC and PstA) and a solute-binding protein (PstS).</text>
</comment>
<comment type="subcellular location">
    <subcellularLocation>
        <location evidence="1">Cell membrane</location>
        <topology evidence="1">Peripheral membrane protein</topology>
    </subcellularLocation>
</comment>
<comment type="similarity">
    <text evidence="1">Belongs to the ABC transporter superfamily. Phosphate importer (TC 3.A.1.7) family.</text>
</comment>
<feature type="chain" id="PRO_0000092893" description="Phosphate import ATP-binding protein PstB">
    <location>
        <begin position="1"/>
        <end position="258"/>
    </location>
</feature>
<feature type="domain" description="ABC transporter" evidence="1">
    <location>
        <begin position="5"/>
        <end position="247"/>
    </location>
</feature>
<feature type="binding site" evidence="1">
    <location>
        <begin position="37"/>
        <end position="44"/>
    </location>
    <ligand>
        <name>ATP</name>
        <dbReference type="ChEBI" id="CHEBI:30616"/>
    </ligand>
</feature>
<dbReference type="EC" id="7.3.2.1" evidence="1"/>
<dbReference type="EMBL" id="AL939119">
    <property type="protein sequence ID" value="CAB88472.1"/>
    <property type="molecule type" value="Genomic_DNA"/>
</dbReference>
<dbReference type="RefSeq" id="NP_628316.1">
    <property type="nucleotide sequence ID" value="NC_003888.3"/>
</dbReference>
<dbReference type="RefSeq" id="WP_003974830.1">
    <property type="nucleotide sequence ID" value="NZ_VNID01000039.1"/>
</dbReference>
<dbReference type="SMR" id="Q9KZW2"/>
<dbReference type="FunCoup" id="Q9KZW2">
    <property type="interactions" value="138"/>
</dbReference>
<dbReference type="STRING" id="100226.gene:17761783"/>
<dbReference type="PaxDb" id="100226-SCO4139"/>
<dbReference type="GeneID" id="96656456"/>
<dbReference type="KEGG" id="sco:SCO4139"/>
<dbReference type="PATRIC" id="fig|100226.15.peg.4203"/>
<dbReference type="eggNOG" id="COG1117">
    <property type="taxonomic scope" value="Bacteria"/>
</dbReference>
<dbReference type="HOGENOM" id="CLU_000604_1_22_11"/>
<dbReference type="InParanoid" id="Q9KZW2"/>
<dbReference type="OrthoDB" id="4283894at2"/>
<dbReference type="PhylomeDB" id="Q9KZW2"/>
<dbReference type="Proteomes" id="UP000001973">
    <property type="component" value="Chromosome"/>
</dbReference>
<dbReference type="GO" id="GO:0005886">
    <property type="term" value="C:plasma membrane"/>
    <property type="evidence" value="ECO:0007669"/>
    <property type="project" value="UniProtKB-SubCell"/>
</dbReference>
<dbReference type="GO" id="GO:0005524">
    <property type="term" value="F:ATP binding"/>
    <property type="evidence" value="ECO:0007669"/>
    <property type="project" value="UniProtKB-KW"/>
</dbReference>
<dbReference type="GO" id="GO:0016887">
    <property type="term" value="F:ATP hydrolysis activity"/>
    <property type="evidence" value="ECO:0007669"/>
    <property type="project" value="InterPro"/>
</dbReference>
<dbReference type="GO" id="GO:0015415">
    <property type="term" value="F:ATPase-coupled phosphate ion transmembrane transporter activity"/>
    <property type="evidence" value="ECO:0007669"/>
    <property type="project" value="UniProtKB-EC"/>
</dbReference>
<dbReference type="GO" id="GO:0035435">
    <property type="term" value="P:phosphate ion transmembrane transport"/>
    <property type="evidence" value="ECO:0007669"/>
    <property type="project" value="InterPro"/>
</dbReference>
<dbReference type="CDD" id="cd03260">
    <property type="entry name" value="ABC_PstB_phosphate_transporter"/>
    <property type="match status" value="1"/>
</dbReference>
<dbReference type="Gene3D" id="3.40.50.300">
    <property type="entry name" value="P-loop containing nucleotide triphosphate hydrolases"/>
    <property type="match status" value="1"/>
</dbReference>
<dbReference type="InterPro" id="IPR003593">
    <property type="entry name" value="AAA+_ATPase"/>
</dbReference>
<dbReference type="InterPro" id="IPR003439">
    <property type="entry name" value="ABC_transporter-like_ATP-bd"/>
</dbReference>
<dbReference type="InterPro" id="IPR017871">
    <property type="entry name" value="ABC_transporter-like_CS"/>
</dbReference>
<dbReference type="InterPro" id="IPR027417">
    <property type="entry name" value="P-loop_NTPase"/>
</dbReference>
<dbReference type="InterPro" id="IPR005670">
    <property type="entry name" value="PstB-like"/>
</dbReference>
<dbReference type="NCBIfam" id="TIGR00972">
    <property type="entry name" value="3a0107s01c2"/>
    <property type="match status" value="1"/>
</dbReference>
<dbReference type="PANTHER" id="PTHR43423">
    <property type="entry name" value="ABC TRANSPORTER I FAMILY MEMBER 17"/>
    <property type="match status" value="1"/>
</dbReference>
<dbReference type="PANTHER" id="PTHR43423:SF1">
    <property type="entry name" value="ABC TRANSPORTER I FAMILY MEMBER 17"/>
    <property type="match status" value="1"/>
</dbReference>
<dbReference type="Pfam" id="PF00005">
    <property type="entry name" value="ABC_tran"/>
    <property type="match status" value="1"/>
</dbReference>
<dbReference type="SMART" id="SM00382">
    <property type="entry name" value="AAA"/>
    <property type="match status" value="1"/>
</dbReference>
<dbReference type="SUPFAM" id="SSF52540">
    <property type="entry name" value="P-loop containing nucleoside triphosphate hydrolases"/>
    <property type="match status" value="1"/>
</dbReference>
<dbReference type="PROSITE" id="PS00211">
    <property type="entry name" value="ABC_TRANSPORTER_1"/>
    <property type="match status" value="1"/>
</dbReference>
<dbReference type="PROSITE" id="PS50893">
    <property type="entry name" value="ABC_TRANSPORTER_2"/>
    <property type="match status" value="1"/>
</dbReference>
<dbReference type="PROSITE" id="PS51238">
    <property type="entry name" value="PSTB"/>
    <property type="match status" value="1"/>
</dbReference>
<name>PSTB_STRCO</name>
<protein>
    <recommendedName>
        <fullName evidence="1">Phosphate import ATP-binding protein PstB</fullName>
        <ecNumber evidence="1">7.3.2.1</ecNumber>
    </recommendedName>
    <alternativeName>
        <fullName evidence="1">ABC phosphate transporter</fullName>
    </alternativeName>
    <alternativeName>
        <fullName evidence="1">Phosphate-transporting ATPase</fullName>
    </alternativeName>
</protein>
<accession>Q9KZW2</accession>
<organism>
    <name type="scientific">Streptomyces coelicolor (strain ATCC BAA-471 / A3(2) / M145)</name>
    <dbReference type="NCBI Taxonomy" id="100226"/>
    <lineage>
        <taxon>Bacteria</taxon>
        <taxon>Bacillati</taxon>
        <taxon>Actinomycetota</taxon>
        <taxon>Actinomycetes</taxon>
        <taxon>Kitasatosporales</taxon>
        <taxon>Streptomycetaceae</taxon>
        <taxon>Streptomyces</taxon>
        <taxon>Streptomyces albidoflavus group</taxon>
    </lineage>
</organism>
<proteinExistence type="inferred from homology"/>